<gene>
    <name type="ORF">SPAC17A5.09c</name>
</gene>
<organism>
    <name type="scientific">Schizosaccharomyces pombe (strain 972 / ATCC 24843)</name>
    <name type="common">Fission yeast</name>
    <dbReference type="NCBI Taxonomy" id="284812"/>
    <lineage>
        <taxon>Eukaryota</taxon>
        <taxon>Fungi</taxon>
        <taxon>Dikarya</taxon>
        <taxon>Ascomycota</taxon>
        <taxon>Taphrinomycotina</taxon>
        <taxon>Schizosaccharomycetes</taxon>
        <taxon>Schizosaccharomycetales</taxon>
        <taxon>Schizosaccharomycetaceae</taxon>
        <taxon>Schizosaccharomyces</taxon>
    </lineage>
</organism>
<sequence>MKVKSILKHSRMSSPSLETDSMESGQQQNMVSSTPSIDMNESDCSGTGTPSEERIRRLRWDEENLSKAEQQKSAKMKITEPKTPFQRFLLPDDEVPEINLDETDSKDDFTAGTLGDTLGTLPSTRVSKDSKDDNVSFSSDKKQFYVKKEPFPVPCTEPTTSGDRYTVRMKAPTPKYSTDNHLPSKKELFPRETKPQVEVVHARINNPDDHLRTHPSVNNLGKDSDHADKMYNEGVILGEDEAMEEEALSEAEENIPKKKPDFNELRKKHYFAMAKPLKRDELESSGTESDLERDNSDSGSASDVNMNENE</sequence>
<reference key="1">
    <citation type="journal article" date="2002" name="Nature">
        <title>The genome sequence of Schizosaccharomyces pombe.</title>
        <authorList>
            <person name="Wood V."/>
            <person name="Gwilliam R."/>
            <person name="Rajandream M.A."/>
            <person name="Lyne M.H."/>
            <person name="Lyne R."/>
            <person name="Stewart A."/>
            <person name="Sgouros J.G."/>
            <person name="Peat N."/>
            <person name="Hayles J."/>
            <person name="Baker S.G."/>
            <person name="Basham D."/>
            <person name="Bowman S."/>
            <person name="Brooks K."/>
            <person name="Brown D."/>
            <person name="Brown S."/>
            <person name="Chillingworth T."/>
            <person name="Churcher C.M."/>
            <person name="Collins M."/>
            <person name="Connor R."/>
            <person name="Cronin A."/>
            <person name="Davis P."/>
            <person name="Feltwell T."/>
            <person name="Fraser A."/>
            <person name="Gentles S."/>
            <person name="Goble A."/>
            <person name="Hamlin N."/>
            <person name="Harris D.E."/>
            <person name="Hidalgo J."/>
            <person name="Hodgson G."/>
            <person name="Holroyd S."/>
            <person name="Hornsby T."/>
            <person name="Howarth S."/>
            <person name="Huckle E.J."/>
            <person name="Hunt S."/>
            <person name="Jagels K."/>
            <person name="James K.D."/>
            <person name="Jones L."/>
            <person name="Jones M."/>
            <person name="Leather S."/>
            <person name="McDonald S."/>
            <person name="McLean J."/>
            <person name="Mooney P."/>
            <person name="Moule S."/>
            <person name="Mungall K.L."/>
            <person name="Murphy L.D."/>
            <person name="Niblett D."/>
            <person name="Odell C."/>
            <person name="Oliver K."/>
            <person name="O'Neil S."/>
            <person name="Pearson D."/>
            <person name="Quail M.A."/>
            <person name="Rabbinowitsch E."/>
            <person name="Rutherford K.M."/>
            <person name="Rutter S."/>
            <person name="Saunders D."/>
            <person name="Seeger K."/>
            <person name="Sharp S."/>
            <person name="Skelton J."/>
            <person name="Simmonds M.N."/>
            <person name="Squares R."/>
            <person name="Squares S."/>
            <person name="Stevens K."/>
            <person name="Taylor K."/>
            <person name="Taylor R.G."/>
            <person name="Tivey A."/>
            <person name="Walsh S.V."/>
            <person name="Warren T."/>
            <person name="Whitehead S."/>
            <person name="Woodward J.R."/>
            <person name="Volckaert G."/>
            <person name="Aert R."/>
            <person name="Robben J."/>
            <person name="Grymonprez B."/>
            <person name="Weltjens I."/>
            <person name="Vanstreels E."/>
            <person name="Rieger M."/>
            <person name="Schaefer M."/>
            <person name="Mueller-Auer S."/>
            <person name="Gabel C."/>
            <person name="Fuchs M."/>
            <person name="Duesterhoeft A."/>
            <person name="Fritzc C."/>
            <person name="Holzer E."/>
            <person name="Moestl D."/>
            <person name="Hilbert H."/>
            <person name="Borzym K."/>
            <person name="Langer I."/>
            <person name="Beck A."/>
            <person name="Lehrach H."/>
            <person name="Reinhardt R."/>
            <person name="Pohl T.M."/>
            <person name="Eger P."/>
            <person name="Zimmermann W."/>
            <person name="Wedler H."/>
            <person name="Wambutt R."/>
            <person name="Purnelle B."/>
            <person name="Goffeau A."/>
            <person name="Cadieu E."/>
            <person name="Dreano S."/>
            <person name="Gloux S."/>
            <person name="Lelaure V."/>
            <person name="Mottier S."/>
            <person name="Galibert F."/>
            <person name="Aves S.J."/>
            <person name="Xiang Z."/>
            <person name="Hunt C."/>
            <person name="Moore K."/>
            <person name="Hurst S.M."/>
            <person name="Lucas M."/>
            <person name="Rochet M."/>
            <person name="Gaillardin C."/>
            <person name="Tallada V.A."/>
            <person name="Garzon A."/>
            <person name="Thode G."/>
            <person name="Daga R.R."/>
            <person name="Cruzado L."/>
            <person name="Jimenez J."/>
            <person name="Sanchez M."/>
            <person name="del Rey F."/>
            <person name="Benito J."/>
            <person name="Dominguez A."/>
            <person name="Revuelta J.L."/>
            <person name="Moreno S."/>
            <person name="Armstrong J."/>
            <person name="Forsburg S.L."/>
            <person name="Cerutti L."/>
            <person name="Lowe T."/>
            <person name="McCombie W.R."/>
            <person name="Paulsen I."/>
            <person name="Potashkin J."/>
            <person name="Shpakovski G.V."/>
            <person name="Ussery D."/>
            <person name="Barrell B.G."/>
            <person name="Nurse P."/>
        </authorList>
    </citation>
    <scope>NUCLEOTIDE SEQUENCE [LARGE SCALE GENOMIC DNA]</scope>
    <source>
        <strain>972 / ATCC 24843</strain>
    </source>
</reference>
<reference key="2">
    <citation type="journal article" date="2008" name="J. Proteome Res.">
        <title>Phosphoproteome analysis of fission yeast.</title>
        <authorList>
            <person name="Wilson-Grady J.T."/>
            <person name="Villen J."/>
            <person name="Gygi S.P."/>
        </authorList>
    </citation>
    <scope>PHOSPHORYLATION [LARGE SCALE ANALYSIS] AT SER-285</scope>
    <scope>IDENTIFICATION BY MASS SPECTROMETRY</scope>
</reference>
<dbReference type="EMBL" id="CU329670">
    <property type="protein sequence ID" value="CAB11509.1"/>
    <property type="molecule type" value="Genomic_DNA"/>
</dbReference>
<dbReference type="PIR" id="T37824">
    <property type="entry name" value="T37824"/>
</dbReference>
<dbReference type="SMR" id="O13771"/>
<dbReference type="BioGRID" id="278664">
    <property type="interactions" value="52"/>
</dbReference>
<dbReference type="ELM" id="O13771"/>
<dbReference type="STRING" id="284812.O13771"/>
<dbReference type="iPTMnet" id="O13771"/>
<dbReference type="SwissPalm" id="O13771"/>
<dbReference type="PaxDb" id="4896-SPAC17A5.09c.1"/>
<dbReference type="EnsemblFungi" id="SPAC17A5.09c.1">
    <property type="protein sequence ID" value="SPAC17A5.09c.1:pep"/>
    <property type="gene ID" value="SPAC17A5.09c"/>
</dbReference>
<dbReference type="KEGG" id="spo:2542189"/>
<dbReference type="PomBase" id="SPAC17A5.09c"/>
<dbReference type="VEuPathDB" id="FungiDB:SPAC17A5.09c"/>
<dbReference type="HOGENOM" id="CLU_897600_0_0_1"/>
<dbReference type="InParanoid" id="O13771"/>
<dbReference type="OMA" id="KHYFAMA"/>
<dbReference type="PRO" id="PR:O13771"/>
<dbReference type="Proteomes" id="UP000002485">
    <property type="component" value="Chromosome I"/>
</dbReference>
<dbReference type="GO" id="GO:0005829">
    <property type="term" value="C:cytosol"/>
    <property type="evidence" value="ECO:0007005"/>
    <property type="project" value="PomBase"/>
</dbReference>
<dbReference type="GO" id="GO:0005634">
    <property type="term" value="C:nucleus"/>
    <property type="evidence" value="ECO:0007005"/>
    <property type="project" value="PomBase"/>
</dbReference>
<dbReference type="GO" id="GO:0004864">
    <property type="term" value="F:protein phosphatase inhibitor activity"/>
    <property type="evidence" value="ECO:0000318"/>
    <property type="project" value="GO_Central"/>
</dbReference>
<dbReference type="GO" id="GO:0035556">
    <property type="term" value="P:intracellular signal transduction"/>
    <property type="evidence" value="ECO:0000318"/>
    <property type="project" value="GO_Central"/>
</dbReference>
<dbReference type="GO" id="GO:0009966">
    <property type="term" value="P:regulation of signal transduction"/>
    <property type="evidence" value="ECO:0007669"/>
    <property type="project" value="InterPro"/>
</dbReference>
<dbReference type="Gene3D" id="6.10.250.1050">
    <property type="match status" value="1"/>
</dbReference>
<dbReference type="InterPro" id="IPR007062">
    <property type="entry name" value="PPI-2"/>
</dbReference>
<dbReference type="PANTHER" id="PTHR12398:SF20">
    <property type="entry name" value="PROTEIN PHOSPHATASE 1 REGULATORY INHIBITOR SUBUNIT 2"/>
    <property type="match status" value="1"/>
</dbReference>
<dbReference type="PANTHER" id="PTHR12398">
    <property type="entry name" value="PROTEIN PHOSPHATASE INHIBITOR"/>
    <property type="match status" value="1"/>
</dbReference>
<dbReference type="Pfam" id="PF04979">
    <property type="entry name" value="IPP-2"/>
    <property type="match status" value="1"/>
</dbReference>
<feature type="chain" id="PRO_0000116708" description="Uncharacterized protein C17A5.09c">
    <location>
        <begin position="1"/>
        <end position="310"/>
    </location>
</feature>
<feature type="region of interest" description="Disordered" evidence="1">
    <location>
        <begin position="1"/>
        <end position="227"/>
    </location>
</feature>
<feature type="region of interest" description="Disordered" evidence="1">
    <location>
        <begin position="242"/>
        <end position="310"/>
    </location>
</feature>
<feature type="compositionally biased region" description="Basic residues" evidence="1">
    <location>
        <begin position="1"/>
        <end position="11"/>
    </location>
</feature>
<feature type="compositionally biased region" description="Polar residues" evidence="1">
    <location>
        <begin position="12"/>
        <end position="50"/>
    </location>
</feature>
<feature type="compositionally biased region" description="Basic and acidic residues" evidence="1">
    <location>
        <begin position="51"/>
        <end position="80"/>
    </location>
</feature>
<feature type="compositionally biased region" description="Acidic residues" evidence="1">
    <location>
        <begin position="91"/>
        <end position="105"/>
    </location>
</feature>
<feature type="compositionally biased region" description="Low complexity" evidence="1">
    <location>
        <begin position="110"/>
        <end position="121"/>
    </location>
</feature>
<feature type="compositionally biased region" description="Basic and acidic residues" evidence="1">
    <location>
        <begin position="126"/>
        <end position="150"/>
    </location>
</feature>
<feature type="compositionally biased region" description="Basic and acidic residues" evidence="1">
    <location>
        <begin position="182"/>
        <end position="195"/>
    </location>
</feature>
<feature type="compositionally biased region" description="Acidic residues" evidence="1">
    <location>
        <begin position="242"/>
        <end position="253"/>
    </location>
</feature>
<feature type="compositionally biased region" description="Basic and acidic residues" evidence="1">
    <location>
        <begin position="254"/>
        <end position="265"/>
    </location>
</feature>
<feature type="compositionally biased region" description="Polar residues" evidence="1">
    <location>
        <begin position="297"/>
        <end position="310"/>
    </location>
</feature>
<feature type="modified residue" description="Phosphoserine" evidence="2">
    <location>
        <position position="285"/>
    </location>
</feature>
<keyword id="KW-0597">Phosphoprotein</keyword>
<keyword id="KW-1185">Reference proteome</keyword>
<accession>O13771</accession>
<protein>
    <recommendedName>
        <fullName>Uncharacterized protein C17A5.09c</fullName>
    </recommendedName>
</protein>
<name>YE99_SCHPO</name>
<evidence type="ECO:0000256" key="1">
    <source>
        <dbReference type="SAM" id="MobiDB-lite"/>
    </source>
</evidence>
<evidence type="ECO:0000269" key="2">
    <source>
    </source>
</evidence>
<proteinExistence type="evidence at protein level"/>